<comment type="function">
    <text evidence="1">Part of the ABC transporter complex PstSACB involved in phosphate import. Responsible for energy coupling to the transport system.</text>
</comment>
<comment type="catalytic activity">
    <reaction evidence="1">
        <text>phosphate(out) + ATP + H2O = ADP + 2 phosphate(in) + H(+)</text>
        <dbReference type="Rhea" id="RHEA:24440"/>
        <dbReference type="ChEBI" id="CHEBI:15377"/>
        <dbReference type="ChEBI" id="CHEBI:15378"/>
        <dbReference type="ChEBI" id="CHEBI:30616"/>
        <dbReference type="ChEBI" id="CHEBI:43474"/>
        <dbReference type="ChEBI" id="CHEBI:456216"/>
        <dbReference type="EC" id="7.3.2.1"/>
    </reaction>
</comment>
<comment type="subunit">
    <text evidence="1">The complex is composed of two ATP-binding proteins (PstB), two transmembrane proteins (PstC and PstA) and a solute-binding protein (PstS).</text>
</comment>
<comment type="subcellular location">
    <subcellularLocation>
        <location evidence="1">Cell inner membrane</location>
        <topology evidence="1">Peripheral membrane protein</topology>
    </subcellularLocation>
</comment>
<comment type="similarity">
    <text evidence="1">Belongs to the ABC transporter superfamily. Phosphate importer (TC 3.A.1.7) family.</text>
</comment>
<dbReference type="EC" id="7.3.2.1" evidence="1"/>
<dbReference type="EMBL" id="CP000230">
    <property type="protein sequence ID" value="ABC21405.1"/>
    <property type="molecule type" value="Genomic_DNA"/>
</dbReference>
<dbReference type="RefSeq" id="YP_425692.1">
    <property type="nucleotide sequence ID" value="NC_007643.1"/>
</dbReference>
<dbReference type="SMR" id="Q2RWU0"/>
<dbReference type="STRING" id="269796.Rru_A0601"/>
<dbReference type="EnsemblBacteria" id="ABC21405">
    <property type="protein sequence ID" value="ABC21405"/>
    <property type="gene ID" value="Rru_A0601"/>
</dbReference>
<dbReference type="KEGG" id="rru:Rru_A0601"/>
<dbReference type="PATRIC" id="fig|269796.9.peg.654"/>
<dbReference type="eggNOG" id="COG1117">
    <property type="taxonomic scope" value="Bacteria"/>
</dbReference>
<dbReference type="HOGENOM" id="CLU_000604_1_22_5"/>
<dbReference type="PhylomeDB" id="Q2RWU0"/>
<dbReference type="Proteomes" id="UP000001929">
    <property type="component" value="Chromosome"/>
</dbReference>
<dbReference type="GO" id="GO:0005886">
    <property type="term" value="C:plasma membrane"/>
    <property type="evidence" value="ECO:0007669"/>
    <property type="project" value="UniProtKB-SubCell"/>
</dbReference>
<dbReference type="GO" id="GO:0005524">
    <property type="term" value="F:ATP binding"/>
    <property type="evidence" value="ECO:0007669"/>
    <property type="project" value="UniProtKB-KW"/>
</dbReference>
<dbReference type="GO" id="GO:0016887">
    <property type="term" value="F:ATP hydrolysis activity"/>
    <property type="evidence" value="ECO:0007669"/>
    <property type="project" value="InterPro"/>
</dbReference>
<dbReference type="GO" id="GO:0015415">
    <property type="term" value="F:ATPase-coupled phosphate ion transmembrane transporter activity"/>
    <property type="evidence" value="ECO:0007669"/>
    <property type="project" value="UniProtKB-EC"/>
</dbReference>
<dbReference type="GO" id="GO:0035435">
    <property type="term" value="P:phosphate ion transmembrane transport"/>
    <property type="evidence" value="ECO:0007669"/>
    <property type="project" value="InterPro"/>
</dbReference>
<dbReference type="CDD" id="cd03260">
    <property type="entry name" value="ABC_PstB_phosphate_transporter"/>
    <property type="match status" value="1"/>
</dbReference>
<dbReference type="Gene3D" id="3.40.50.300">
    <property type="entry name" value="P-loop containing nucleotide triphosphate hydrolases"/>
    <property type="match status" value="1"/>
</dbReference>
<dbReference type="InterPro" id="IPR003593">
    <property type="entry name" value="AAA+_ATPase"/>
</dbReference>
<dbReference type="InterPro" id="IPR003439">
    <property type="entry name" value="ABC_transporter-like_ATP-bd"/>
</dbReference>
<dbReference type="InterPro" id="IPR017871">
    <property type="entry name" value="ABC_transporter-like_CS"/>
</dbReference>
<dbReference type="InterPro" id="IPR027417">
    <property type="entry name" value="P-loop_NTPase"/>
</dbReference>
<dbReference type="InterPro" id="IPR005670">
    <property type="entry name" value="PstB-like"/>
</dbReference>
<dbReference type="NCBIfam" id="TIGR00972">
    <property type="entry name" value="3a0107s01c2"/>
    <property type="match status" value="1"/>
</dbReference>
<dbReference type="PANTHER" id="PTHR43423">
    <property type="entry name" value="ABC TRANSPORTER I FAMILY MEMBER 17"/>
    <property type="match status" value="1"/>
</dbReference>
<dbReference type="PANTHER" id="PTHR43423:SF1">
    <property type="entry name" value="ABC TRANSPORTER I FAMILY MEMBER 17"/>
    <property type="match status" value="1"/>
</dbReference>
<dbReference type="Pfam" id="PF00005">
    <property type="entry name" value="ABC_tran"/>
    <property type="match status" value="1"/>
</dbReference>
<dbReference type="SMART" id="SM00382">
    <property type="entry name" value="AAA"/>
    <property type="match status" value="1"/>
</dbReference>
<dbReference type="SUPFAM" id="SSF52540">
    <property type="entry name" value="P-loop containing nucleoside triphosphate hydrolases"/>
    <property type="match status" value="1"/>
</dbReference>
<dbReference type="PROSITE" id="PS00211">
    <property type="entry name" value="ABC_TRANSPORTER_1"/>
    <property type="match status" value="1"/>
</dbReference>
<dbReference type="PROSITE" id="PS50893">
    <property type="entry name" value="ABC_TRANSPORTER_2"/>
    <property type="match status" value="1"/>
</dbReference>
<dbReference type="PROSITE" id="PS51238">
    <property type="entry name" value="PSTB"/>
    <property type="match status" value="1"/>
</dbReference>
<proteinExistence type="inferred from homology"/>
<name>PSTB_RHORT</name>
<evidence type="ECO:0000255" key="1">
    <source>
        <dbReference type="HAMAP-Rule" id="MF_01702"/>
    </source>
</evidence>
<gene>
    <name evidence="1" type="primary">pstB</name>
    <name type="ordered locus">Rru_A0601</name>
</gene>
<sequence length="248" mass="27410">MAVNDVNVFYGAKQAIKNVGLDIVAREVTAFIGPSGCGKSTFLRCLNRMNDTIDICKVTGDIRLDGEDVYDRHIDVVELRARVGMVFQKPNPFPKSIYENIAYGPRIHGIARGKSELDEIVQSSLERAGLWEEVKDRLESPGTGLSGGQQQRVCIARAIAVSPEVILMDEPCSALDPIATAKIEELIDELRSNYTIVIVTHSMQQAARVSQRTAFFHLGRLIECGDTETIFTNPQHNLTQGYITGRFG</sequence>
<reference key="1">
    <citation type="journal article" date="2011" name="Stand. Genomic Sci.">
        <title>Complete genome sequence of Rhodospirillum rubrum type strain (S1).</title>
        <authorList>
            <person name="Munk A.C."/>
            <person name="Copeland A."/>
            <person name="Lucas S."/>
            <person name="Lapidus A."/>
            <person name="Del Rio T.G."/>
            <person name="Barry K."/>
            <person name="Detter J.C."/>
            <person name="Hammon N."/>
            <person name="Israni S."/>
            <person name="Pitluck S."/>
            <person name="Brettin T."/>
            <person name="Bruce D."/>
            <person name="Han C."/>
            <person name="Tapia R."/>
            <person name="Gilna P."/>
            <person name="Schmutz J."/>
            <person name="Larimer F."/>
            <person name="Land M."/>
            <person name="Kyrpides N.C."/>
            <person name="Mavromatis K."/>
            <person name="Richardson P."/>
            <person name="Rohde M."/>
            <person name="Goeker M."/>
            <person name="Klenk H.P."/>
            <person name="Zhang Y."/>
            <person name="Roberts G.P."/>
            <person name="Reslewic S."/>
            <person name="Schwartz D.C."/>
        </authorList>
    </citation>
    <scope>NUCLEOTIDE SEQUENCE [LARGE SCALE GENOMIC DNA]</scope>
    <source>
        <strain>ATCC 11170 / ATH 1.1.1 / DSM 467 / LMG 4362 / NCIMB 8255 / S1</strain>
    </source>
</reference>
<keyword id="KW-0067">ATP-binding</keyword>
<keyword id="KW-0997">Cell inner membrane</keyword>
<keyword id="KW-1003">Cell membrane</keyword>
<keyword id="KW-0472">Membrane</keyword>
<keyword id="KW-0547">Nucleotide-binding</keyword>
<keyword id="KW-0592">Phosphate transport</keyword>
<keyword id="KW-1185">Reference proteome</keyword>
<keyword id="KW-1278">Translocase</keyword>
<keyword id="KW-0813">Transport</keyword>
<organism>
    <name type="scientific">Rhodospirillum rubrum (strain ATCC 11170 / ATH 1.1.1 / DSM 467 / LMG 4362 / NCIMB 8255 / S1)</name>
    <dbReference type="NCBI Taxonomy" id="269796"/>
    <lineage>
        <taxon>Bacteria</taxon>
        <taxon>Pseudomonadati</taxon>
        <taxon>Pseudomonadota</taxon>
        <taxon>Alphaproteobacteria</taxon>
        <taxon>Rhodospirillales</taxon>
        <taxon>Rhodospirillaceae</taxon>
        <taxon>Rhodospirillum</taxon>
    </lineage>
</organism>
<accession>Q2RWU0</accession>
<feature type="chain" id="PRO_0000272516" description="Phosphate import ATP-binding protein PstB">
    <location>
        <begin position="1"/>
        <end position="248"/>
    </location>
</feature>
<feature type="domain" description="ABC transporter" evidence="1">
    <location>
        <begin position="1"/>
        <end position="243"/>
    </location>
</feature>
<feature type="binding site" evidence="1">
    <location>
        <begin position="33"/>
        <end position="40"/>
    </location>
    <ligand>
        <name>ATP</name>
        <dbReference type="ChEBI" id="CHEBI:30616"/>
    </ligand>
</feature>
<protein>
    <recommendedName>
        <fullName evidence="1">Phosphate import ATP-binding protein PstB</fullName>
        <ecNumber evidence="1">7.3.2.1</ecNumber>
    </recommendedName>
    <alternativeName>
        <fullName evidence="1">ABC phosphate transporter</fullName>
    </alternativeName>
    <alternativeName>
        <fullName evidence="1">Phosphate-transporting ATPase</fullName>
    </alternativeName>
</protein>